<sequence>MVAAPDRLITLAVVTGAHGITGEVRLKPFTEDAAQFKAYGIFSANGTPLTLKKLRPDPKGWVARFSEITDRNQAEALRGTALTVPRKALPDLPADEYYYIDLIGLPCVDPSGQSIGVSVAVENYGAGDILEIEKADEKRFMVPIAQAVDVHDDHLVIAADFIE</sequence>
<evidence type="ECO:0000255" key="1">
    <source>
        <dbReference type="HAMAP-Rule" id="MF_00014"/>
    </source>
</evidence>
<comment type="function">
    <text evidence="1">An accessory protein needed during the final step in the assembly of 30S ribosomal subunit, possibly for assembly of the head region. Essential for efficient processing of 16S rRNA. May be needed both before and after RbfA during the maturation of 16S rRNA. It has affinity for free ribosomal 30S subunits but not for 70S ribosomes.</text>
</comment>
<comment type="subunit">
    <text evidence="1">Binds ribosomal protein uS19.</text>
</comment>
<comment type="subcellular location">
    <subcellularLocation>
        <location evidence="1">Cytoplasm</location>
    </subcellularLocation>
</comment>
<comment type="domain">
    <text evidence="1">The PRC barrel domain binds ribosomal protein uS19.</text>
</comment>
<comment type="similarity">
    <text evidence="1">Belongs to the RimM family.</text>
</comment>
<organism>
    <name type="scientific">Zymomonas mobilis subsp. mobilis (strain ATCC 31821 / ZM4 / CP4)</name>
    <dbReference type="NCBI Taxonomy" id="264203"/>
    <lineage>
        <taxon>Bacteria</taxon>
        <taxon>Pseudomonadati</taxon>
        <taxon>Pseudomonadota</taxon>
        <taxon>Alphaproteobacteria</taxon>
        <taxon>Sphingomonadales</taxon>
        <taxon>Zymomonadaceae</taxon>
        <taxon>Zymomonas</taxon>
    </lineage>
</organism>
<gene>
    <name evidence="1" type="primary">rimM</name>
    <name type="ordered locus">ZMO1077</name>
</gene>
<keyword id="KW-0143">Chaperone</keyword>
<keyword id="KW-0963">Cytoplasm</keyword>
<keyword id="KW-1185">Reference proteome</keyword>
<keyword id="KW-0690">Ribosome biogenesis</keyword>
<keyword id="KW-0698">rRNA processing</keyword>
<protein>
    <recommendedName>
        <fullName evidence="1">Ribosome maturation factor RimM</fullName>
    </recommendedName>
</protein>
<reference key="1">
    <citation type="journal article" date="2005" name="Nat. Biotechnol.">
        <title>The genome sequence of the ethanologenic bacterium Zymomonas mobilis ZM4.</title>
        <authorList>
            <person name="Seo J.-S."/>
            <person name="Chong H."/>
            <person name="Park H.S."/>
            <person name="Yoon K.-O."/>
            <person name="Jung C."/>
            <person name="Kim J.J."/>
            <person name="Hong J.H."/>
            <person name="Kim H."/>
            <person name="Kim J.-H."/>
            <person name="Kil J.-I."/>
            <person name="Park C.J."/>
            <person name="Oh H.-M."/>
            <person name="Lee J.-S."/>
            <person name="Jin S.-J."/>
            <person name="Um H.-W."/>
            <person name="Lee H.-J."/>
            <person name="Oh S.-J."/>
            <person name="Kim J.Y."/>
            <person name="Kang H.L."/>
            <person name="Lee S.Y."/>
            <person name="Lee K.J."/>
            <person name="Kang H.S."/>
        </authorList>
    </citation>
    <scope>NUCLEOTIDE SEQUENCE [LARGE SCALE GENOMIC DNA]</scope>
    <source>
        <strain>ATCC 31821 / ZM4 / CP4</strain>
    </source>
</reference>
<feature type="chain" id="PRO_0000163397" description="Ribosome maturation factor RimM">
    <location>
        <begin position="1"/>
        <end position="163"/>
    </location>
</feature>
<feature type="domain" description="PRC barrel" evidence="1">
    <location>
        <begin position="94"/>
        <end position="162"/>
    </location>
</feature>
<name>RIMM_ZYMMO</name>
<dbReference type="EMBL" id="AE008692">
    <property type="protein sequence ID" value="AAV89701.1"/>
    <property type="molecule type" value="Genomic_DNA"/>
</dbReference>
<dbReference type="RefSeq" id="WP_011240912.1">
    <property type="nucleotide sequence ID" value="NZ_CP035711.1"/>
</dbReference>
<dbReference type="SMR" id="Q5NNK9"/>
<dbReference type="STRING" id="264203.ZMO1077"/>
<dbReference type="GeneID" id="79903792"/>
<dbReference type="KEGG" id="zmo:ZMO1077"/>
<dbReference type="eggNOG" id="COG0806">
    <property type="taxonomic scope" value="Bacteria"/>
</dbReference>
<dbReference type="HOGENOM" id="CLU_077636_0_1_5"/>
<dbReference type="Proteomes" id="UP000001173">
    <property type="component" value="Chromosome"/>
</dbReference>
<dbReference type="GO" id="GO:0005737">
    <property type="term" value="C:cytoplasm"/>
    <property type="evidence" value="ECO:0007669"/>
    <property type="project" value="UniProtKB-SubCell"/>
</dbReference>
<dbReference type="GO" id="GO:0005840">
    <property type="term" value="C:ribosome"/>
    <property type="evidence" value="ECO:0007669"/>
    <property type="project" value="InterPro"/>
</dbReference>
<dbReference type="GO" id="GO:0043022">
    <property type="term" value="F:ribosome binding"/>
    <property type="evidence" value="ECO:0007669"/>
    <property type="project" value="InterPro"/>
</dbReference>
<dbReference type="GO" id="GO:0042274">
    <property type="term" value="P:ribosomal small subunit biogenesis"/>
    <property type="evidence" value="ECO:0007669"/>
    <property type="project" value="UniProtKB-UniRule"/>
</dbReference>
<dbReference type="GO" id="GO:0006364">
    <property type="term" value="P:rRNA processing"/>
    <property type="evidence" value="ECO:0007669"/>
    <property type="project" value="UniProtKB-UniRule"/>
</dbReference>
<dbReference type="Gene3D" id="2.30.30.240">
    <property type="entry name" value="PRC-barrel domain"/>
    <property type="match status" value="1"/>
</dbReference>
<dbReference type="Gene3D" id="2.40.30.60">
    <property type="entry name" value="RimM"/>
    <property type="match status" value="1"/>
</dbReference>
<dbReference type="HAMAP" id="MF_00014">
    <property type="entry name" value="Ribosome_mat_RimM"/>
    <property type="match status" value="1"/>
</dbReference>
<dbReference type="InterPro" id="IPR011033">
    <property type="entry name" value="PRC_barrel-like_sf"/>
</dbReference>
<dbReference type="InterPro" id="IPR056792">
    <property type="entry name" value="PRC_RimM"/>
</dbReference>
<dbReference type="InterPro" id="IPR011961">
    <property type="entry name" value="RimM"/>
</dbReference>
<dbReference type="InterPro" id="IPR002676">
    <property type="entry name" value="RimM_N"/>
</dbReference>
<dbReference type="InterPro" id="IPR036976">
    <property type="entry name" value="RimM_N_sf"/>
</dbReference>
<dbReference type="InterPro" id="IPR009000">
    <property type="entry name" value="Transl_B-barrel_sf"/>
</dbReference>
<dbReference type="NCBIfam" id="TIGR02273">
    <property type="entry name" value="16S_RimM"/>
    <property type="match status" value="1"/>
</dbReference>
<dbReference type="PANTHER" id="PTHR33692">
    <property type="entry name" value="RIBOSOME MATURATION FACTOR RIMM"/>
    <property type="match status" value="1"/>
</dbReference>
<dbReference type="PANTHER" id="PTHR33692:SF1">
    <property type="entry name" value="RIBOSOME MATURATION FACTOR RIMM"/>
    <property type="match status" value="1"/>
</dbReference>
<dbReference type="Pfam" id="PF24986">
    <property type="entry name" value="PRC_RimM"/>
    <property type="match status" value="1"/>
</dbReference>
<dbReference type="Pfam" id="PF01782">
    <property type="entry name" value="RimM"/>
    <property type="match status" value="1"/>
</dbReference>
<dbReference type="SUPFAM" id="SSF50346">
    <property type="entry name" value="PRC-barrel domain"/>
    <property type="match status" value="1"/>
</dbReference>
<dbReference type="SUPFAM" id="SSF50447">
    <property type="entry name" value="Translation proteins"/>
    <property type="match status" value="1"/>
</dbReference>
<accession>Q5NNK9</accession>
<proteinExistence type="inferred from homology"/>